<evidence type="ECO:0000255" key="1">
    <source>
        <dbReference type="HAMAP-Rule" id="MF_00011"/>
    </source>
</evidence>
<feature type="chain" id="PRO_0000095178" description="Adenylosuccinate synthetase">
    <location>
        <begin position="1"/>
        <end position="430"/>
    </location>
</feature>
<feature type="active site" description="Proton acceptor" evidence="1">
    <location>
        <position position="13"/>
    </location>
</feature>
<feature type="active site" description="Proton donor" evidence="1">
    <location>
        <position position="41"/>
    </location>
</feature>
<feature type="binding site" evidence="1">
    <location>
        <begin position="12"/>
        <end position="18"/>
    </location>
    <ligand>
        <name>GTP</name>
        <dbReference type="ChEBI" id="CHEBI:37565"/>
    </ligand>
</feature>
<feature type="binding site" description="in other chain" evidence="1">
    <location>
        <begin position="13"/>
        <end position="16"/>
    </location>
    <ligand>
        <name>IMP</name>
        <dbReference type="ChEBI" id="CHEBI:58053"/>
        <note>ligand shared between dimeric partners</note>
    </ligand>
</feature>
<feature type="binding site" evidence="1">
    <location>
        <position position="13"/>
    </location>
    <ligand>
        <name>Mg(2+)</name>
        <dbReference type="ChEBI" id="CHEBI:18420"/>
    </ligand>
</feature>
<feature type="binding site" description="in other chain" evidence="1">
    <location>
        <begin position="38"/>
        <end position="41"/>
    </location>
    <ligand>
        <name>IMP</name>
        <dbReference type="ChEBI" id="CHEBI:58053"/>
        <note>ligand shared between dimeric partners</note>
    </ligand>
</feature>
<feature type="binding site" evidence="1">
    <location>
        <begin position="40"/>
        <end position="42"/>
    </location>
    <ligand>
        <name>GTP</name>
        <dbReference type="ChEBI" id="CHEBI:37565"/>
    </ligand>
</feature>
<feature type="binding site" evidence="1">
    <location>
        <position position="40"/>
    </location>
    <ligand>
        <name>Mg(2+)</name>
        <dbReference type="ChEBI" id="CHEBI:18420"/>
    </ligand>
</feature>
<feature type="binding site" description="in other chain" evidence="1">
    <location>
        <position position="128"/>
    </location>
    <ligand>
        <name>IMP</name>
        <dbReference type="ChEBI" id="CHEBI:58053"/>
        <note>ligand shared between dimeric partners</note>
    </ligand>
</feature>
<feature type="binding site" evidence="1">
    <location>
        <position position="142"/>
    </location>
    <ligand>
        <name>IMP</name>
        <dbReference type="ChEBI" id="CHEBI:58053"/>
        <note>ligand shared between dimeric partners</note>
    </ligand>
</feature>
<feature type="binding site" description="in other chain" evidence="1">
    <location>
        <position position="223"/>
    </location>
    <ligand>
        <name>IMP</name>
        <dbReference type="ChEBI" id="CHEBI:58053"/>
        <note>ligand shared between dimeric partners</note>
    </ligand>
</feature>
<feature type="binding site" description="in other chain" evidence="1">
    <location>
        <position position="238"/>
    </location>
    <ligand>
        <name>IMP</name>
        <dbReference type="ChEBI" id="CHEBI:58053"/>
        <note>ligand shared between dimeric partners</note>
    </ligand>
</feature>
<feature type="binding site" evidence="1">
    <location>
        <begin position="298"/>
        <end position="304"/>
    </location>
    <ligand>
        <name>substrate</name>
    </ligand>
</feature>
<feature type="binding site" description="in other chain" evidence="1">
    <location>
        <position position="302"/>
    </location>
    <ligand>
        <name>IMP</name>
        <dbReference type="ChEBI" id="CHEBI:58053"/>
        <note>ligand shared between dimeric partners</note>
    </ligand>
</feature>
<feature type="binding site" evidence="1">
    <location>
        <position position="304"/>
    </location>
    <ligand>
        <name>GTP</name>
        <dbReference type="ChEBI" id="CHEBI:37565"/>
    </ligand>
</feature>
<feature type="binding site" evidence="1">
    <location>
        <begin position="330"/>
        <end position="332"/>
    </location>
    <ligand>
        <name>GTP</name>
        <dbReference type="ChEBI" id="CHEBI:37565"/>
    </ligand>
</feature>
<feature type="binding site" evidence="1">
    <location>
        <begin position="412"/>
        <end position="414"/>
    </location>
    <ligand>
        <name>GTP</name>
        <dbReference type="ChEBI" id="CHEBI:37565"/>
    </ligand>
</feature>
<accession>Q839Y4</accession>
<gene>
    <name evidence="1" type="primary">purA</name>
    <name type="ordered locus">EF_0014</name>
</gene>
<keyword id="KW-0963">Cytoplasm</keyword>
<keyword id="KW-0342">GTP-binding</keyword>
<keyword id="KW-0436">Ligase</keyword>
<keyword id="KW-0460">Magnesium</keyword>
<keyword id="KW-0479">Metal-binding</keyword>
<keyword id="KW-0547">Nucleotide-binding</keyword>
<keyword id="KW-0658">Purine biosynthesis</keyword>
<keyword id="KW-1185">Reference proteome</keyword>
<comment type="function">
    <text evidence="1">Plays an important role in the de novo pathway of purine nucleotide biosynthesis. Catalyzes the first committed step in the biosynthesis of AMP from IMP.</text>
</comment>
<comment type="catalytic activity">
    <reaction evidence="1">
        <text>IMP + L-aspartate + GTP = N(6)-(1,2-dicarboxyethyl)-AMP + GDP + phosphate + 2 H(+)</text>
        <dbReference type="Rhea" id="RHEA:15753"/>
        <dbReference type="ChEBI" id="CHEBI:15378"/>
        <dbReference type="ChEBI" id="CHEBI:29991"/>
        <dbReference type="ChEBI" id="CHEBI:37565"/>
        <dbReference type="ChEBI" id="CHEBI:43474"/>
        <dbReference type="ChEBI" id="CHEBI:57567"/>
        <dbReference type="ChEBI" id="CHEBI:58053"/>
        <dbReference type="ChEBI" id="CHEBI:58189"/>
        <dbReference type="EC" id="6.3.4.4"/>
    </reaction>
</comment>
<comment type="cofactor">
    <cofactor evidence="1">
        <name>Mg(2+)</name>
        <dbReference type="ChEBI" id="CHEBI:18420"/>
    </cofactor>
    <text evidence="1">Binds 1 Mg(2+) ion per subunit.</text>
</comment>
<comment type="pathway">
    <text evidence="1">Purine metabolism; AMP biosynthesis via de novo pathway; AMP from IMP: step 1/2.</text>
</comment>
<comment type="subunit">
    <text evidence="1">Homodimer.</text>
</comment>
<comment type="subcellular location">
    <subcellularLocation>
        <location evidence="1">Cytoplasm</location>
    </subcellularLocation>
</comment>
<comment type="similarity">
    <text evidence="1">Belongs to the adenylosuccinate synthetase family.</text>
</comment>
<dbReference type="EC" id="6.3.4.4" evidence="1"/>
<dbReference type="EMBL" id="AE016830">
    <property type="protein sequence ID" value="AAO79898.1"/>
    <property type="molecule type" value="Genomic_DNA"/>
</dbReference>
<dbReference type="RefSeq" id="NP_813826.1">
    <property type="nucleotide sequence ID" value="NC_004668.1"/>
</dbReference>
<dbReference type="RefSeq" id="WP_002359213.1">
    <property type="nucleotide sequence ID" value="NZ_KE136524.1"/>
</dbReference>
<dbReference type="SMR" id="Q839Y4"/>
<dbReference type="STRING" id="226185.EF_0014"/>
<dbReference type="EnsemblBacteria" id="AAO79898">
    <property type="protein sequence ID" value="AAO79898"/>
    <property type="gene ID" value="EF_0014"/>
</dbReference>
<dbReference type="KEGG" id="efa:EF0014"/>
<dbReference type="PATRIC" id="fig|226185.45.peg.241"/>
<dbReference type="eggNOG" id="COG0104">
    <property type="taxonomic scope" value="Bacteria"/>
</dbReference>
<dbReference type="HOGENOM" id="CLU_029848_0_0_9"/>
<dbReference type="UniPathway" id="UPA00075">
    <property type="reaction ID" value="UER00335"/>
</dbReference>
<dbReference type="Proteomes" id="UP000001415">
    <property type="component" value="Chromosome"/>
</dbReference>
<dbReference type="GO" id="GO:0005737">
    <property type="term" value="C:cytoplasm"/>
    <property type="evidence" value="ECO:0007669"/>
    <property type="project" value="UniProtKB-SubCell"/>
</dbReference>
<dbReference type="GO" id="GO:0004019">
    <property type="term" value="F:adenylosuccinate synthase activity"/>
    <property type="evidence" value="ECO:0007669"/>
    <property type="project" value="UniProtKB-UniRule"/>
</dbReference>
<dbReference type="GO" id="GO:0005525">
    <property type="term" value="F:GTP binding"/>
    <property type="evidence" value="ECO:0007669"/>
    <property type="project" value="UniProtKB-UniRule"/>
</dbReference>
<dbReference type="GO" id="GO:0000287">
    <property type="term" value="F:magnesium ion binding"/>
    <property type="evidence" value="ECO:0007669"/>
    <property type="project" value="UniProtKB-UniRule"/>
</dbReference>
<dbReference type="GO" id="GO:0044208">
    <property type="term" value="P:'de novo' AMP biosynthetic process"/>
    <property type="evidence" value="ECO:0007669"/>
    <property type="project" value="UniProtKB-UniRule"/>
</dbReference>
<dbReference type="GO" id="GO:0046040">
    <property type="term" value="P:IMP metabolic process"/>
    <property type="evidence" value="ECO:0007669"/>
    <property type="project" value="TreeGrafter"/>
</dbReference>
<dbReference type="CDD" id="cd03108">
    <property type="entry name" value="AdSS"/>
    <property type="match status" value="1"/>
</dbReference>
<dbReference type="FunFam" id="1.10.300.10:FF:000001">
    <property type="entry name" value="Adenylosuccinate synthetase"/>
    <property type="match status" value="1"/>
</dbReference>
<dbReference type="FunFam" id="3.90.170.10:FF:000001">
    <property type="entry name" value="Adenylosuccinate synthetase"/>
    <property type="match status" value="1"/>
</dbReference>
<dbReference type="Gene3D" id="3.40.440.10">
    <property type="entry name" value="Adenylosuccinate Synthetase, subunit A, domain 1"/>
    <property type="match status" value="1"/>
</dbReference>
<dbReference type="Gene3D" id="1.10.300.10">
    <property type="entry name" value="Adenylosuccinate Synthetase, subunit A, domain 2"/>
    <property type="match status" value="1"/>
</dbReference>
<dbReference type="Gene3D" id="3.90.170.10">
    <property type="entry name" value="Adenylosuccinate Synthetase, subunit A, domain 3"/>
    <property type="match status" value="1"/>
</dbReference>
<dbReference type="HAMAP" id="MF_00011">
    <property type="entry name" value="Adenylosucc_synth"/>
    <property type="match status" value="1"/>
</dbReference>
<dbReference type="InterPro" id="IPR018220">
    <property type="entry name" value="Adenylosuccin_syn_GTP-bd"/>
</dbReference>
<dbReference type="InterPro" id="IPR033128">
    <property type="entry name" value="Adenylosuccin_syn_Lys_AS"/>
</dbReference>
<dbReference type="InterPro" id="IPR042109">
    <property type="entry name" value="Adenylosuccinate_synth_dom1"/>
</dbReference>
<dbReference type="InterPro" id="IPR042110">
    <property type="entry name" value="Adenylosuccinate_synth_dom2"/>
</dbReference>
<dbReference type="InterPro" id="IPR042111">
    <property type="entry name" value="Adenylosuccinate_synth_dom3"/>
</dbReference>
<dbReference type="InterPro" id="IPR001114">
    <property type="entry name" value="Adenylosuccinate_synthetase"/>
</dbReference>
<dbReference type="InterPro" id="IPR027417">
    <property type="entry name" value="P-loop_NTPase"/>
</dbReference>
<dbReference type="NCBIfam" id="NF002223">
    <property type="entry name" value="PRK01117.1"/>
    <property type="match status" value="1"/>
</dbReference>
<dbReference type="NCBIfam" id="TIGR00184">
    <property type="entry name" value="purA"/>
    <property type="match status" value="1"/>
</dbReference>
<dbReference type="PANTHER" id="PTHR11846">
    <property type="entry name" value="ADENYLOSUCCINATE SYNTHETASE"/>
    <property type="match status" value="1"/>
</dbReference>
<dbReference type="PANTHER" id="PTHR11846:SF0">
    <property type="entry name" value="ADENYLOSUCCINATE SYNTHETASE"/>
    <property type="match status" value="1"/>
</dbReference>
<dbReference type="Pfam" id="PF00709">
    <property type="entry name" value="Adenylsucc_synt"/>
    <property type="match status" value="1"/>
</dbReference>
<dbReference type="SMART" id="SM00788">
    <property type="entry name" value="Adenylsucc_synt"/>
    <property type="match status" value="1"/>
</dbReference>
<dbReference type="SUPFAM" id="SSF52540">
    <property type="entry name" value="P-loop containing nucleoside triphosphate hydrolases"/>
    <property type="match status" value="1"/>
</dbReference>
<dbReference type="PROSITE" id="PS01266">
    <property type="entry name" value="ADENYLOSUCCIN_SYN_1"/>
    <property type="match status" value="1"/>
</dbReference>
<dbReference type="PROSITE" id="PS00513">
    <property type="entry name" value="ADENYLOSUCCIN_SYN_2"/>
    <property type="match status" value="1"/>
</dbReference>
<sequence length="430" mass="47503">MSSVVVVGTQWGDEGKGKITDFLSENAEVIARYQGGDNAGHTIKFDGVTYKLHLIPSGIFYKEKISVIGNGVVVNPKSLVKELAYLKENNVATDNLRISDRAHVILPYHIKLDQLQEDAKGENKIGTTIKGIGPAYMDKAARVGIRIADLLDKEIFAERLQINLEEKNRQFVKMFDSEAIEFDDIFEEYYEYGQQIKQYVTDTSVILNDALDAGKRVLFEGAQGVMLDIDQGTYPFVTSSNPVAGGVTIGSGVGPSKINKVVGVCKAYTSRVGDGPFPTELFDETGETIRRVGKEYGTTTGRPRRVGWFDSVVMRHSKRVSGITNLSLNSIDVLSGLETVKICTAYELDGELIYHYPASLKELSRCKPVYEELPGWSEDITGCKTLADLPANARNYVHRISELVGVRISTFSVGPDRNQTNVLESVWAQI</sequence>
<protein>
    <recommendedName>
        <fullName evidence="1">Adenylosuccinate synthetase</fullName>
        <shortName evidence="1">AMPSase</shortName>
        <shortName evidence="1">AdSS</shortName>
        <ecNumber evidence="1">6.3.4.4</ecNumber>
    </recommendedName>
    <alternativeName>
        <fullName evidence="1">IMP--aspartate ligase</fullName>
    </alternativeName>
</protein>
<proteinExistence type="inferred from homology"/>
<reference key="1">
    <citation type="journal article" date="2003" name="Science">
        <title>Role of mobile DNA in the evolution of vancomycin-resistant Enterococcus faecalis.</title>
        <authorList>
            <person name="Paulsen I.T."/>
            <person name="Banerjei L."/>
            <person name="Myers G.S.A."/>
            <person name="Nelson K.E."/>
            <person name="Seshadri R."/>
            <person name="Read T.D."/>
            <person name="Fouts D.E."/>
            <person name="Eisen J.A."/>
            <person name="Gill S.R."/>
            <person name="Heidelberg J.F."/>
            <person name="Tettelin H."/>
            <person name="Dodson R.J."/>
            <person name="Umayam L.A."/>
            <person name="Brinkac L.M."/>
            <person name="Beanan M.J."/>
            <person name="Daugherty S.C."/>
            <person name="DeBoy R.T."/>
            <person name="Durkin S.A."/>
            <person name="Kolonay J.F."/>
            <person name="Madupu R."/>
            <person name="Nelson W.C."/>
            <person name="Vamathevan J.J."/>
            <person name="Tran B."/>
            <person name="Upton J."/>
            <person name="Hansen T."/>
            <person name="Shetty J."/>
            <person name="Khouri H.M."/>
            <person name="Utterback T.R."/>
            <person name="Radune D."/>
            <person name="Ketchum K.A."/>
            <person name="Dougherty B.A."/>
            <person name="Fraser C.M."/>
        </authorList>
    </citation>
    <scope>NUCLEOTIDE SEQUENCE [LARGE SCALE GENOMIC DNA]</scope>
    <source>
        <strain>ATCC 700802 / V583</strain>
    </source>
</reference>
<organism>
    <name type="scientific">Enterococcus faecalis (strain ATCC 700802 / V583)</name>
    <dbReference type="NCBI Taxonomy" id="226185"/>
    <lineage>
        <taxon>Bacteria</taxon>
        <taxon>Bacillati</taxon>
        <taxon>Bacillota</taxon>
        <taxon>Bacilli</taxon>
        <taxon>Lactobacillales</taxon>
        <taxon>Enterococcaceae</taxon>
        <taxon>Enterococcus</taxon>
    </lineage>
</organism>
<name>PURA_ENTFA</name>